<keyword id="KW-0031">Aminopeptidase</keyword>
<keyword id="KW-0963">Cytoplasm</keyword>
<keyword id="KW-0378">Hydrolase</keyword>
<keyword id="KW-0645">Protease</keyword>
<keyword id="KW-0720">Serine protease</keyword>
<sequence length="760" mass="86816">MRYNQFSYIPTSLERAAEELKELGFDLDLQKTAKVNLESFLRKLFFHYPDSDYPLSHLITKNDMDALSFFQSEQELSKEVFDLLALQVLGFIPGVDFTEADAFLDKLAFPIHFDETEIIKHIHHILATRCKSGMTLIDDLVSQGMLTMDNDYHFFNGKSLATFDTSQLIREVVYVEAPLDTDQDGQLDLIKVNIIRPQSQKPLPTLMTPSPYHQGINEVANDKKLYRMEKELVVKKRRQITVEDRDFIPLETQPCKLPIGQNLEIFSYINSYSLNDYFLARGFANIYVSGVGTAGSTGFMTSGDYAQIESFKAVIDWLNGRATAYTSHSKTHQVRADWANGLVCTTGKSYLGTMSTGLATTGVDGLAMIIAESAISSWYNYYRENGLVCSPGGYPGEDLDVLTELTYSRNLLAGDYLRHNDRYQELLNQQSQALDRQSGDYNQFWHDRNYLKNAHQIKCDVVYTHGLQDWNVKPRQVYEIVNALPSTINKHLFLHQGEHVYMHNWQSIDFRESMNVLLCQKLLGLANDFSLPEMIWQDNTCPQNWQERKVFGTSTIKELDLGQELLLIDNHYGEDEFKAYGKDFRAFKAALFKGKANQALVDILLEEDLPINGEIVLQLKVKSSENKGLLSAQILDYGKKKRLGDLPIALTQSSIDNGQNFSREPLKELPFREDSYRVISKGFMNLQNRNNLSSIETIPNNKWMTVRLPLQPTIYHLEKGDTLRVILYTTDFEHTVRDNSNYALTIDLSQSQLIVPIASN</sequence>
<reference key="1">
    <citation type="journal article" date="2007" name="J. Bacteriol.">
        <title>Complete genome of acute rheumatic fever-associated serotype M5 Streptococcus pyogenes strain Manfredo.</title>
        <authorList>
            <person name="Holden M.T.G."/>
            <person name="Scott A."/>
            <person name="Cherevach I."/>
            <person name="Chillingworth T."/>
            <person name="Churcher C."/>
            <person name="Cronin A."/>
            <person name="Dowd L."/>
            <person name="Feltwell T."/>
            <person name="Hamlin N."/>
            <person name="Holroyd S."/>
            <person name="Jagels K."/>
            <person name="Moule S."/>
            <person name="Mungall K."/>
            <person name="Quail M.A."/>
            <person name="Price C."/>
            <person name="Rabbinowitsch E."/>
            <person name="Sharp S."/>
            <person name="Skelton J."/>
            <person name="Whitehead S."/>
            <person name="Barrell B.G."/>
            <person name="Kehoe M."/>
            <person name="Parkhill J."/>
        </authorList>
    </citation>
    <scope>NUCLEOTIDE SEQUENCE [LARGE SCALE GENOMIC DNA]</scope>
    <source>
        <strain>Manfredo</strain>
    </source>
</reference>
<dbReference type="EC" id="3.4.14.11" evidence="1"/>
<dbReference type="EMBL" id="AM295007">
    <property type="protein sequence ID" value="CAM29615.1"/>
    <property type="molecule type" value="Genomic_DNA"/>
</dbReference>
<dbReference type="RefSeq" id="WP_011888609.1">
    <property type="nucleotide sequence ID" value="NC_009332.1"/>
</dbReference>
<dbReference type="SMR" id="A2RCP2"/>
<dbReference type="ESTHER" id="strpy-PEPXP">
    <property type="family name" value="Lactobacillus_peptidase"/>
</dbReference>
<dbReference type="KEGG" id="spf:SpyM50273"/>
<dbReference type="HOGENOM" id="CLU_011800_0_0_9"/>
<dbReference type="GO" id="GO:0005737">
    <property type="term" value="C:cytoplasm"/>
    <property type="evidence" value="ECO:0007669"/>
    <property type="project" value="UniProtKB-SubCell"/>
</dbReference>
<dbReference type="GO" id="GO:0004177">
    <property type="term" value="F:aminopeptidase activity"/>
    <property type="evidence" value="ECO:0007669"/>
    <property type="project" value="UniProtKB-KW"/>
</dbReference>
<dbReference type="GO" id="GO:0008239">
    <property type="term" value="F:dipeptidyl-peptidase activity"/>
    <property type="evidence" value="ECO:0007669"/>
    <property type="project" value="UniProtKB-UniRule"/>
</dbReference>
<dbReference type="GO" id="GO:0008236">
    <property type="term" value="F:serine-type peptidase activity"/>
    <property type="evidence" value="ECO:0007669"/>
    <property type="project" value="UniProtKB-KW"/>
</dbReference>
<dbReference type="GO" id="GO:0006508">
    <property type="term" value="P:proteolysis"/>
    <property type="evidence" value="ECO:0007669"/>
    <property type="project" value="UniProtKB-KW"/>
</dbReference>
<dbReference type="Gene3D" id="1.10.246.70">
    <property type="match status" value="1"/>
</dbReference>
<dbReference type="Gene3D" id="3.40.50.1820">
    <property type="entry name" value="alpha/beta hydrolase"/>
    <property type="match status" value="1"/>
</dbReference>
<dbReference type="Gene3D" id="2.60.120.260">
    <property type="entry name" value="Galactose-binding domain-like"/>
    <property type="match status" value="1"/>
</dbReference>
<dbReference type="HAMAP" id="MF_00698">
    <property type="entry name" value="Aminopeptidase_S15"/>
    <property type="match status" value="1"/>
</dbReference>
<dbReference type="InterPro" id="IPR029058">
    <property type="entry name" value="AB_hydrolase_fold"/>
</dbReference>
<dbReference type="InterPro" id="IPR008979">
    <property type="entry name" value="Galactose-bd-like_sf"/>
</dbReference>
<dbReference type="InterPro" id="IPR008252">
    <property type="entry name" value="Pept_S15_Xpro"/>
</dbReference>
<dbReference type="InterPro" id="IPR015251">
    <property type="entry name" value="PepX_N_dom"/>
</dbReference>
<dbReference type="InterPro" id="IPR036313">
    <property type="entry name" value="PepX_N_dom_sf"/>
</dbReference>
<dbReference type="InterPro" id="IPR000383">
    <property type="entry name" value="Xaa-Pro-like_dom"/>
</dbReference>
<dbReference type="InterPro" id="IPR013736">
    <property type="entry name" value="Xaa-Pro_dipept_C"/>
</dbReference>
<dbReference type="InterPro" id="IPR050585">
    <property type="entry name" value="Xaa-Pro_dipeptidyl-ppase/CocE"/>
</dbReference>
<dbReference type="NCBIfam" id="NF003783">
    <property type="entry name" value="PRK05371.1-4"/>
    <property type="match status" value="1"/>
</dbReference>
<dbReference type="PANTHER" id="PTHR43056:SF10">
    <property type="entry name" value="COCE_NOND FAMILY, PUTATIVE (AFU_ORTHOLOGUE AFUA_7G00600)-RELATED"/>
    <property type="match status" value="1"/>
</dbReference>
<dbReference type="PANTHER" id="PTHR43056">
    <property type="entry name" value="PEPTIDASE S9 PROLYL OLIGOPEPTIDASE"/>
    <property type="match status" value="1"/>
</dbReference>
<dbReference type="Pfam" id="PF02129">
    <property type="entry name" value="Peptidase_S15"/>
    <property type="match status" value="1"/>
</dbReference>
<dbReference type="Pfam" id="PF08530">
    <property type="entry name" value="PepX_C"/>
    <property type="match status" value="1"/>
</dbReference>
<dbReference type="Pfam" id="PF09168">
    <property type="entry name" value="PepX_N"/>
    <property type="match status" value="1"/>
</dbReference>
<dbReference type="PRINTS" id="PR00923">
    <property type="entry name" value="LACTOPTASE"/>
</dbReference>
<dbReference type="SMART" id="SM00939">
    <property type="entry name" value="PepX_C"/>
    <property type="match status" value="1"/>
</dbReference>
<dbReference type="SMART" id="SM00940">
    <property type="entry name" value="PepX_N"/>
    <property type="match status" value="1"/>
</dbReference>
<dbReference type="SUPFAM" id="SSF53474">
    <property type="entry name" value="alpha/beta-Hydrolases"/>
    <property type="match status" value="1"/>
</dbReference>
<dbReference type="SUPFAM" id="SSF49785">
    <property type="entry name" value="Galactose-binding domain-like"/>
    <property type="match status" value="1"/>
</dbReference>
<dbReference type="SUPFAM" id="SSF81761">
    <property type="entry name" value="X-Prolyl dipeptidyl aminopeptidase PepX, N-terminal domain"/>
    <property type="match status" value="1"/>
</dbReference>
<gene>
    <name evidence="1" type="primary">pepX</name>
    <name type="ordered locus">SpyM50273</name>
</gene>
<feature type="chain" id="PRO_1000045492" description="Xaa-Pro dipeptidyl-peptidase">
    <location>
        <begin position="1"/>
        <end position="760"/>
    </location>
</feature>
<feature type="active site" description="Charge relay system" evidence="1">
    <location>
        <position position="349"/>
    </location>
</feature>
<feature type="active site" description="Charge relay system" evidence="1">
    <location>
        <position position="469"/>
    </location>
</feature>
<feature type="active site" description="Charge relay system" evidence="1">
    <location>
        <position position="499"/>
    </location>
</feature>
<protein>
    <recommendedName>
        <fullName evidence="1">Xaa-Pro dipeptidyl-peptidase</fullName>
        <ecNumber evidence="1">3.4.14.11</ecNumber>
    </recommendedName>
    <alternativeName>
        <fullName evidence="1">X-Pro dipeptidyl-peptidase</fullName>
    </alternativeName>
    <alternativeName>
        <fullName evidence="1">X-prolyl-dipeptidyl aminopeptidase</fullName>
        <shortName evidence="1">X-PDAP</shortName>
    </alternativeName>
</protein>
<accession>A2RCP2</accession>
<name>PEPX_STRPG</name>
<organism>
    <name type="scientific">Streptococcus pyogenes serotype M5 (strain Manfredo)</name>
    <dbReference type="NCBI Taxonomy" id="160491"/>
    <lineage>
        <taxon>Bacteria</taxon>
        <taxon>Bacillati</taxon>
        <taxon>Bacillota</taxon>
        <taxon>Bacilli</taxon>
        <taxon>Lactobacillales</taxon>
        <taxon>Streptococcaceae</taxon>
        <taxon>Streptococcus</taxon>
    </lineage>
</organism>
<evidence type="ECO:0000255" key="1">
    <source>
        <dbReference type="HAMAP-Rule" id="MF_00698"/>
    </source>
</evidence>
<comment type="function">
    <text evidence="1">Removes N-terminal dipeptides sequentially from polypeptides having unsubstituted N-termini provided that the penultimate residue is proline.</text>
</comment>
<comment type="catalytic activity">
    <reaction evidence="1">
        <text>Hydrolyzes Xaa-Pro-|- bonds to release unblocked, N-terminal dipeptides from substrates including Ala-Pro-|-p-nitroanilide and (sequentially) Tyr-Pro-|-Phe-Pro-|-Gly-Pro-|-Ile.</text>
        <dbReference type="EC" id="3.4.14.11"/>
    </reaction>
</comment>
<comment type="subunit">
    <text evidence="1">Homodimer.</text>
</comment>
<comment type="subcellular location">
    <subcellularLocation>
        <location evidence="1">Cytoplasm</location>
    </subcellularLocation>
</comment>
<comment type="similarity">
    <text evidence="1">Belongs to the peptidase S15 family.</text>
</comment>
<proteinExistence type="inferred from homology"/>